<comment type="function">
    <text evidence="1">Transfers the gamma-phosphate of ATP to the 4'-position of a tetraacyldisaccharide 1-phosphate intermediate (termed DS-1-P) to form tetraacyldisaccharide 1,4'-bis-phosphate (lipid IVA).</text>
</comment>
<comment type="catalytic activity">
    <reaction evidence="1">
        <text>a lipid A disaccharide + ATP = a lipid IVA + ADP + H(+)</text>
        <dbReference type="Rhea" id="RHEA:67840"/>
        <dbReference type="ChEBI" id="CHEBI:15378"/>
        <dbReference type="ChEBI" id="CHEBI:30616"/>
        <dbReference type="ChEBI" id="CHEBI:176343"/>
        <dbReference type="ChEBI" id="CHEBI:176425"/>
        <dbReference type="ChEBI" id="CHEBI:456216"/>
        <dbReference type="EC" id="2.7.1.130"/>
    </reaction>
</comment>
<comment type="pathway">
    <text evidence="1">Glycolipid biosynthesis; lipid IV(A) biosynthesis; lipid IV(A) from (3R)-3-hydroxytetradecanoyl-[acyl-carrier-protein] and UDP-N-acetyl-alpha-D-glucosamine: step 6/6.</text>
</comment>
<comment type="similarity">
    <text evidence="1">Belongs to the LpxK family.</text>
</comment>
<accession>B9KR99</accession>
<name>LPXK_CERSK</name>
<keyword id="KW-0067">ATP-binding</keyword>
<keyword id="KW-0418">Kinase</keyword>
<keyword id="KW-0441">Lipid A biosynthesis</keyword>
<keyword id="KW-0444">Lipid biosynthesis</keyword>
<keyword id="KW-0443">Lipid metabolism</keyword>
<keyword id="KW-0547">Nucleotide-binding</keyword>
<keyword id="KW-0808">Transferase</keyword>
<organism>
    <name type="scientific">Cereibacter sphaeroides (strain KD131 / KCTC 12085)</name>
    <name type="common">Rhodobacter sphaeroides</name>
    <dbReference type="NCBI Taxonomy" id="557760"/>
    <lineage>
        <taxon>Bacteria</taxon>
        <taxon>Pseudomonadati</taxon>
        <taxon>Pseudomonadota</taxon>
        <taxon>Alphaproteobacteria</taxon>
        <taxon>Rhodobacterales</taxon>
        <taxon>Paracoccaceae</taxon>
        <taxon>Cereibacter</taxon>
    </lineage>
</organism>
<protein>
    <recommendedName>
        <fullName evidence="1">Tetraacyldisaccharide 4'-kinase</fullName>
        <ecNumber evidence="1">2.7.1.130</ecNumber>
    </recommendedName>
    <alternativeName>
        <fullName evidence="1">Lipid A 4'-kinase</fullName>
    </alternativeName>
</protein>
<proteinExistence type="inferred from homology"/>
<sequence length="332" mass="35235">MRPPAFWFTPPDRPALAARLLAPLGQAYAAATARRLRAPGHRAGVPVICIGNLNAGGTGKTPTAIALMQRLAARGIEAHVVSRGYGGRLEGPVEVDARRHRAADVGDEPLLLAAFGRAWVARDRAAGVRAAEAAGAQAILLDDGFQNPSVVKDLSLIVVDAAVGFGNGRCLPAGPLREPVEAGLARADLLLSIGGPEAQRRFATDWPALPVPRLTGRLATLQMGMYWQGARVLAFAGIGRPEKFFASLRAEGAELLRAEALDDHQPLGEALMKRLEIEAMALGAQLVTTEKDAVRLPPSFRQKVLTLPVRLEFDDGSALDAALDRLNLTARS</sequence>
<feature type="chain" id="PRO_1000134750" description="Tetraacyldisaccharide 4'-kinase">
    <location>
        <begin position="1"/>
        <end position="332"/>
    </location>
</feature>
<feature type="binding site" evidence="1">
    <location>
        <begin position="54"/>
        <end position="61"/>
    </location>
    <ligand>
        <name>ATP</name>
        <dbReference type="ChEBI" id="CHEBI:30616"/>
    </ligand>
</feature>
<dbReference type="EC" id="2.7.1.130" evidence="1"/>
<dbReference type="EMBL" id="CP001150">
    <property type="protein sequence ID" value="ACM02713.1"/>
    <property type="molecule type" value="Genomic_DNA"/>
</dbReference>
<dbReference type="RefSeq" id="WP_015921712.1">
    <property type="nucleotide sequence ID" value="NC_011963.1"/>
</dbReference>
<dbReference type="SMR" id="B9KR99"/>
<dbReference type="GeneID" id="67448226"/>
<dbReference type="KEGG" id="rsk:RSKD131_2853"/>
<dbReference type="HOGENOM" id="CLU_038816_0_0_5"/>
<dbReference type="UniPathway" id="UPA00359">
    <property type="reaction ID" value="UER00482"/>
</dbReference>
<dbReference type="GO" id="GO:0005886">
    <property type="term" value="C:plasma membrane"/>
    <property type="evidence" value="ECO:0007669"/>
    <property type="project" value="TreeGrafter"/>
</dbReference>
<dbReference type="GO" id="GO:0005524">
    <property type="term" value="F:ATP binding"/>
    <property type="evidence" value="ECO:0007669"/>
    <property type="project" value="UniProtKB-UniRule"/>
</dbReference>
<dbReference type="GO" id="GO:0009029">
    <property type="term" value="F:tetraacyldisaccharide 4'-kinase activity"/>
    <property type="evidence" value="ECO:0007669"/>
    <property type="project" value="UniProtKB-UniRule"/>
</dbReference>
<dbReference type="GO" id="GO:0009245">
    <property type="term" value="P:lipid A biosynthetic process"/>
    <property type="evidence" value="ECO:0007669"/>
    <property type="project" value="UniProtKB-UniRule"/>
</dbReference>
<dbReference type="GO" id="GO:0009244">
    <property type="term" value="P:lipopolysaccharide core region biosynthetic process"/>
    <property type="evidence" value="ECO:0007669"/>
    <property type="project" value="TreeGrafter"/>
</dbReference>
<dbReference type="HAMAP" id="MF_00409">
    <property type="entry name" value="LpxK"/>
    <property type="match status" value="1"/>
</dbReference>
<dbReference type="InterPro" id="IPR003758">
    <property type="entry name" value="LpxK"/>
</dbReference>
<dbReference type="InterPro" id="IPR027417">
    <property type="entry name" value="P-loop_NTPase"/>
</dbReference>
<dbReference type="NCBIfam" id="TIGR00682">
    <property type="entry name" value="lpxK"/>
    <property type="match status" value="1"/>
</dbReference>
<dbReference type="PANTHER" id="PTHR42724">
    <property type="entry name" value="TETRAACYLDISACCHARIDE 4'-KINASE"/>
    <property type="match status" value="1"/>
</dbReference>
<dbReference type="PANTHER" id="PTHR42724:SF1">
    <property type="entry name" value="TETRAACYLDISACCHARIDE 4'-KINASE, MITOCHONDRIAL-RELATED"/>
    <property type="match status" value="1"/>
</dbReference>
<dbReference type="Pfam" id="PF02606">
    <property type="entry name" value="LpxK"/>
    <property type="match status" value="1"/>
</dbReference>
<dbReference type="SUPFAM" id="SSF52540">
    <property type="entry name" value="P-loop containing nucleoside triphosphate hydrolases"/>
    <property type="match status" value="1"/>
</dbReference>
<reference key="1">
    <citation type="journal article" date="2009" name="J. Bacteriol.">
        <title>Complete genome sequence of Rhodobacter sphaeroides KD131.</title>
        <authorList>
            <person name="Lim S.-K."/>
            <person name="Kim S.J."/>
            <person name="Cha S.H."/>
            <person name="Oh Y.-K."/>
            <person name="Rhee H.-J."/>
            <person name="Kim M.-S."/>
            <person name="Lee J.K."/>
        </authorList>
    </citation>
    <scope>NUCLEOTIDE SEQUENCE [LARGE SCALE GENOMIC DNA]</scope>
    <source>
        <strain>KD131 / KCTC 12085</strain>
    </source>
</reference>
<gene>
    <name evidence="1" type="primary">lpxK</name>
    <name type="ordered locus">RSKD131_2853</name>
</gene>
<evidence type="ECO:0000255" key="1">
    <source>
        <dbReference type="HAMAP-Rule" id="MF_00409"/>
    </source>
</evidence>